<proteinExistence type="inferred from homology"/>
<dbReference type="EC" id="2.5.1.7" evidence="1"/>
<dbReference type="EMBL" id="AE016825">
    <property type="protein sequence ID" value="AAQ58118.1"/>
    <property type="molecule type" value="Genomic_DNA"/>
</dbReference>
<dbReference type="RefSeq" id="WP_011133995.1">
    <property type="nucleotide sequence ID" value="NC_005085.1"/>
</dbReference>
<dbReference type="SMR" id="Q7P0X5"/>
<dbReference type="STRING" id="243365.CV_0440"/>
<dbReference type="GeneID" id="66365653"/>
<dbReference type="KEGG" id="cvi:CV_0440"/>
<dbReference type="eggNOG" id="COG0766">
    <property type="taxonomic scope" value="Bacteria"/>
</dbReference>
<dbReference type="HOGENOM" id="CLU_027387_0_0_4"/>
<dbReference type="OrthoDB" id="9803760at2"/>
<dbReference type="UniPathway" id="UPA00219"/>
<dbReference type="Proteomes" id="UP000001424">
    <property type="component" value="Chromosome"/>
</dbReference>
<dbReference type="GO" id="GO:0005737">
    <property type="term" value="C:cytoplasm"/>
    <property type="evidence" value="ECO:0007669"/>
    <property type="project" value="UniProtKB-SubCell"/>
</dbReference>
<dbReference type="GO" id="GO:0008760">
    <property type="term" value="F:UDP-N-acetylglucosamine 1-carboxyvinyltransferase activity"/>
    <property type="evidence" value="ECO:0007669"/>
    <property type="project" value="UniProtKB-UniRule"/>
</dbReference>
<dbReference type="GO" id="GO:0051301">
    <property type="term" value="P:cell division"/>
    <property type="evidence" value="ECO:0007669"/>
    <property type="project" value="UniProtKB-KW"/>
</dbReference>
<dbReference type="GO" id="GO:0071555">
    <property type="term" value="P:cell wall organization"/>
    <property type="evidence" value="ECO:0007669"/>
    <property type="project" value="UniProtKB-KW"/>
</dbReference>
<dbReference type="GO" id="GO:0009252">
    <property type="term" value="P:peptidoglycan biosynthetic process"/>
    <property type="evidence" value="ECO:0007669"/>
    <property type="project" value="UniProtKB-UniRule"/>
</dbReference>
<dbReference type="GO" id="GO:0008360">
    <property type="term" value="P:regulation of cell shape"/>
    <property type="evidence" value="ECO:0007669"/>
    <property type="project" value="UniProtKB-KW"/>
</dbReference>
<dbReference type="GO" id="GO:0019277">
    <property type="term" value="P:UDP-N-acetylgalactosamine biosynthetic process"/>
    <property type="evidence" value="ECO:0007669"/>
    <property type="project" value="InterPro"/>
</dbReference>
<dbReference type="CDD" id="cd01555">
    <property type="entry name" value="UdpNAET"/>
    <property type="match status" value="1"/>
</dbReference>
<dbReference type="FunFam" id="3.65.10.10:FF:000002">
    <property type="entry name" value="UDP-N-acetylglucosamine 1-carboxyvinyltransferase"/>
    <property type="match status" value="1"/>
</dbReference>
<dbReference type="Gene3D" id="3.65.10.10">
    <property type="entry name" value="Enolpyruvate transferase domain"/>
    <property type="match status" value="2"/>
</dbReference>
<dbReference type="HAMAP" id="MF_00111">
    <property type="entry name" value="MurA"/>
    <property type="match status" value="1"/>
</dbReference>
<dbReference type="InterPro" id="IPR001986">
    <property type="entry name" value="Enolpyruvate_Tfrase_dom"/>
</dbReference>
<dbReference type="InterPro" id="IPR036968">
    <property type="entry name" value="Enolpyruvate_Tfrase_sf"/>
</dbReference>
<dbReference type="InterPro" id="IPR050068">
    <property type="entry name" value="MurA_subfamily"/>
</dbReference>
<dbReference type="InterPro" id="IPR013792">
    <property type="entry name" value="RNA3'P_cycl/enolpyr_Trfase_a/b"/>
</dbReference>
<dbReference type="InterPro" id="IPR005750">
    <property type="entry name" value="UDP_GlcNAc_COvinyl_MurA"/>
</dbReference>
<dbReference type="NCBIfam" id="TIGR01072">
    <property type="entry name" value="murA"/>
    <property type="match status" value="1"/>
</dbReference>
<dbReference type="NCBIfam" id="NF006873">
    <property type="entry name" value="PRK09369.1"/>
    <property type="match status" value="1"/>
</dbReference>
<dbReference type="PANTHER" id="PTHR43783">
    <property type="entry name" value="UDP-N-ACETYLGLUCOSAMINE 1-CARBOXYVINYLTRANSFERASE"/>
    <property type="match status" value="1"/>
</dbReference>
<dbReference type="PANTHER" id="PTHR43783:SF1">
    <property type="entry name" value="UDP-N-ACETYLGLUCOSAMINE 1-CARBOXYVINYLTRANSFERASE"/>
    <property type="match status" value="1"/>
</dbReference>
<dbReference type="Pfam" id="PF00275">
    <property type="entry name" value="EPSP_synthase"/>
    <property type="match status" value="1"/>
</dbReference>
<dbReference type="SUPFAM" id="SSF55205">
    <property type="entry name" value="EPT/RTPC-like"/>
    <property type="match status" value="1"/>
</dbReference>
<protein>
    <recommendedName>
        <fullName evidence="1">UDP-N-acetylglucosamine 1-carboxyvinyltransferase</fullName>
        <ecNumber evidence="1">2.5.1.7</ecNumber>
    </recommendedName>
    <alternativeName>
        <fullName evidence="1">Enoylpyruvate transferase</fullName>
    </alternativeName>
    <alternativeName>
        <fullName evidence="1">UDP-N-acetylglucosamine enolpyruvyl transferase</fullName>
        <shortName evidence="1">EPT</shortName>
    </alternativeName>
</protein>
<comment type="function">
    <text evidence="1">Cell wall formation. Adds enolpyruvyl to UDP-N-acetylglucosamine.</text>
</comment>
<comment type="catalytic activity">
    <reaction evidence="1">
        <text>phosphoenolpyruvate + UDP-N-acetyl-alpha-D-glucosamine = UDP-N-acetyl-3-O-(1-carboxyvinyl)-alpha-D-glucosamine + phosphate</text>
        <dbReference type="Rhea" id="RHEA:18681"/>
        <dbReference type="ChEBI" id="CHEBI:43474"/>
        <dbReference type="ChEBI" id="CHEBI:57705"/>
        <dbReference type="ChEBI" id="CHEBI:58702"/>
        <dbReference type="ChEBI" id="CHEBI:68483"/>
        <dbReference type="EC" id="2.5.1.7"/>
    </reaction>
</comment>
<comment type="pathway">
    <text evidence="1">Cell wall biogenesis; peptidoglycan biosynthesis.</text>
</comment>
<comment type="subcellular location">
    <subcellularLocation>
        <location evidence="1">Cytoplasm</location>
    </subcellularLocation>
</comment>
<comment type="similarity">
    <text evidence="1">Belongs to the EPSP synthase family. MurA subfamily.</text>
</comment>
<accession>Q7P0X5</accession>
<reference key="1">
    <citation type="journal article" date="2003" name="Proc. Natl. Acad. Sci. U.S.A.">
        <title>The complete genome sequence of Chromobacterium violaceum reveals remarkable and exploitable bacterial adaptability.</title>
        <authorList>
            <person name="Vasconcelos A.T.R."/>
            <person name="de Almeida D.F."/>
            <person name="Hungria M."/>
            <person name="Guimaraes C.T."/>
            <person name="Antonio R.V."/>
            <person name="Almeida F.C."/>
            <person name="de Almeida L.G.P."/>
            <person name="de Almeida R."/>
            <person name="Alves-Gomes J.A."/>
            <person name="Andrade E.M."/>
            <person name="Araripe J."/>
            <person name="de Araujo M.F.F."/>
            <person name="Astolfi-Filho S."/>
            <person name="Azevedo V."/>
            <person name="Baptista A.J."/>
            <person name="Bataus L.A.M."/>
            <person name="Batista J.S."/>
            <person name="Belo A."/>
            <person name="van den Berg C."/>
            <person name="Bogo M."/>
            <person name="Bonatto S."/>
            <person name="Bordignon J."/>
            <person name="Brigido M.M."/>
            <person name="Brito C.A."/>
            <person name="Brocchi M."/>
            <person name="Burity H.A."/>
            <person name="Camargo A.A."/>
            <person name="Cardoso D.D.P."/>
            <person name="Carneiro N.P."/>
            <person name="Carraro D.M."/>
            <person name="Carvalho C.M.B."/>
            <person name="Cascardo J.C.M."/>
            <person name="Cavada B.S."/>
            <person name="Chueire L.M.O."/>
            <person name="Creczynski-Pasa T.B."/>
            <person name="Cunha-Junior N.C."/>
            <person name="Fagundes N."/>
            <person name="Falcao C.L."/>
            <person name="Fantinatti F."/>
            <person name="Farias I.P."/>
            <person name="Felipe M.S.S."/>
            <person name="Ferrari L.P."/>
            <person name="Ferro J.A."/>
            <person name="Ferro M.I.T."/>
            <person name="Franco G.R."/>
            <person name="Freitas N.S.A."/>
            <person name="Furlan L.R."/>
            <person name="Gazzinelli R.T."/>
            <person name="Gomes E.A."/>
            <person name="Goncalves P.R."/>
            <person name="Grangeiro T.B."/>
            <person name="Grattapaglia D."/>
            <person name="Grisard E.C."/>
            <person name="Hanna E.S."/>
            <person name="Jardim S.N."/>
            <person name="Laurino J."/>
            <person name="Leoi L.C.T."/>
            <person name="Lima L.F.A."/>
            <person name="Loureiro M.F."/>
            <person name="Lyra M.C.C.P."/>
            <person name="Madeira H.M.F."/>
            <person name="Manfio G.P."/>
            <person name="Maranhao A.Q."/>
            <person name="Martins W.S."/>
            <person name="di Mauro S.M.Z."/>
            <person name="de Medeiros S.R.B."/>
            <person name="Meissner R.V."/>
            <person name="Moreira M.A.M."/>
            <person name="Nascimento F.F."/>
            <person name="Nicolas M.F."/>
            <person name="Oliveira J.G."/>
            <person name="Oliveira S.C."/>
            <person name="Paixao R.F.C."/>
            <person name="Parente J.A."/>
            <person name="Pedrosa F.O."/>
            <person name="Pena S.D.J."/>
            <person name="Pereira J.O."/>
            <person name="Pereira M."/>
            <person name="Pinto L.S.R.C."/>
            <person name="Pinto L.S."/>
            <person name="Porto J.I.R."/>
            <person name="Potrich D.P."/>
            <person name="Ramalho-Neto C.E."/>
            <person name="Reis A.M.M."/>
            <person name="Rigo L.U."/>
            <person name="Rondinelli E."/>
            <person name="Santos E.B.P."/>
            <person name="Santos F.R."/>
            <person name="Schneider M.P.C."/>
            <person name="Seuanez H.N."/>
            <person name="Silva A.M.R."/>
            <person name="da Silva A.L.C."/>
            <person name="Silva D.W."/>
            <person name="Silva R."/>
            <person name="Simoes I.C."/>
            <person name="Simon D."/>
            <person name="Soares C.M.A."/>
            <person name="Soares R.B.A."/>
            <person name="Souza E.M."/>
            <person name="Souza K.R.L."/>
            <person name="Souza R.C."/>
            <person name="Steffens M.B.R."/>
            <person name="Steindel M."/>
            <person name="Teixeira S.R."/>
            <person name="Urmenyi T."/>
            <person name="Vettore A."/>
            <person name="Wassem R."/>
            <person name="Zaha A."/>
            <person name="Simpson A.J.G."/>
        </authorList>
    </citation>
    <scope>NUCLEOTIDE SEQUENCE [LARGE SCALE GENOMIC DNA]</scope>
    <source>
        <strain>ATCC 12472 / DSM 30191 / JCM 1249 / CCUG 213 / NBRC 12614 / NCIMB 9131 / NCTC 9757 / MK</strain>
    </source>
</reference>
<gene>
    <name evidence="1" type="primary">murA</name>
    <name type="ordered locus">CV_0440</name>
</gene>
<evidence type="ECO:0000255" key="1">
    <source>
        <dbReference type="HAMAP-Rule" id="MF_00111"/>
    </source>
</evidence>
<keyword id="KW-0131">Cell cycle</keyword>
<keyword id="KW-0132">Cell division</keyword>
<keyword id="KW-0133">Cell shape</keyword>
<keyword id="KW-0961">Cell wall biogenesis/degradation</keyword>
<keyword id="KW-0963">Cytoplasm</keyword>
<keyword id="KW-0573">Peptidoglycan synthesis</keyword>
<keyword id="KW-0670">Pyruvate</keyword>
<keyword id="KW-1185">Reference proteome</keyword>
<keyword id="KW-0808">Transferase</keyword>
<organism>
    <name type="scientific">Chromobacterium violaceum (strain ATCC 12472 / DSM 30191 / JCM 1249 / CCUG 213 / NBRC 12614 / NCIMB 9131 / NCTC 9757 / MK)</name>
    <dbReference type="NCBI Taxonomy" id="243365"/>
    <lineage>
        <taxon>Bacteria</taxon>
        <taxon>Pseudomonadati</taxon>
        <taxon>Pseudomonadota</taxon>
        <taxon>Betaproteobacteria</taxon>
        <taxon>Neisseriales</taxon>
        <taxon>Chromobacteriaceae</taxon>
        <taxon>Chromobacterium</taxon>
    </lineage>
</organism>
<feature type="chain" id="PRO_0000231190" description="UDP-N-acetylglucosamine 1-carboxyvinyltransferase">
    <location>
        <begin position="1"/>
        <end position="417"/>
    </location>
</feature>
<feature type="active site" description="Proton donor" evidence="1">
    <location>
        <position position="117"/>
    </location>
</feature>
<feature type="binding site" evidence="1">
    <location>
        <begin position="22"/>
        <end position="23"/>
    </location>
    <ligand>
        <name>phosphoenolpyruvate</name>
        <dbReference type="ChEBI" id="CHEBI:58702"/>
    </ligand>
</feature>
<feature type="binding site" evidence="1">
    <location>
        <position position="93"/>
    </location>
    <ligand>
        <name>UDP-N-acetyl-alpha-D-glucosamine</name>
        <dbReference type="ChEBI" id="CHEBI:57705"/>
    </ligand>
</feature>
<feature type="binding site" evidence="1">
    <location>
        <begin position="122"/>
        <end position="126"/>
    </location>
    <ligand>
        <name>UDP-N-acetyl-alpha-D-glucosamine</name>
        <dbReference type="ChEBI" id="CHEBI:57705"/>
    </ligand>
</feature>
<feature type="binding site" evidence="1">
    <location>
        <position position="305"/>
    </location>
    <ligand>
        <name>UDP-N-acetyl-alpha-D-glucosamine</name>
        <dbReference type="ChEBI" id="CHEBI:57705"/>
    </ligand>
</feature>
<feature type="binding site" evidence="1">
    <location>
        <position position="327"/>
    </location>
    <ligand>
        <name>UDP-N-acetyl-alpha-D-glucosamine</name>
        <dbReference type="ChEBI" id="CHEBI:57705"/>
    </ligand>
</feature>
<feature type="modified residue" description="2-(S-cysteinyl)pyruvic acid O-phosphothioketal" evidence="1">
    <location>
        <position position="117"/>
    </location>
</feature>
<name>MURA_CHRVO</name>
<sequence>MDKLKIIGNGPLNGEIRVSGAKNAALPILCAGLLTADTMRFTNVPMLRDIATTQKLLQGMGVRVMTDNVHEMEITASHLDSLVAPYELVKTMRASILVLGPTLARFGEATVSLPGGCAIGSRPVDQHIKGLVAMGAEVSIEHGYVKARAKRLRGARIVMDMVTVGGTENLLMAATLAEGTTILENAAREPEVTDLANCLVAMGAKISGIGTDRLVIEGVDKLHGAEYAVMPDRIEAGTFLVAGAMTRGHVVLKNAAPKSMEAVLDKLRETGALIECGDDWISLDMKQRPKAVNFRTLPYPAFPTDMQAQLMTLNCVADGAGVVTETIFENRFMHVPELNRMGANIEVEGNTAIVKGVDKLSGATVMATDLRASASLVIAGLVAEGETIVDRIYHLDRGYEYIEKKLGAVGALIERVS</sequence>